<gene>
    <name evidence="1" type="primary">gltX</name>
    <name type="ordered locus">Gbem_2279</name>
</gene>
<sequence>MSQVRLRFAPSPTGYLHVGGARTALFNWLLARKQQGKFILRIEDTDVARSTQESVDAILEGMTWLGLDWDEGPFYQSDNFPLYKEYVEKLIAAGKAYKCYCSAEELEVKREKALKEGGKPKYDGTCRNLPQGADDGRPYVVRFKAPQEGTTYWNDLIKGKISFENAELDDLIIQRTDGTPTYNFVVVIDDATMGVTTVIRGDDHVNNTPRQILLYEALEVPVPQFAHVPMILGADKARLSKRHGATSVMAYRDMGFLPEAMVNYLVRLGWSYGDEEIFSLEDLVQKFSIENVGRSAGVFNPDKLLWLNAHYIKNGDPVRLAGLLIPFLKERGVTDTAGGPELPAVVKTLQERAKTMLELADGALFYYQQELSYDEKGVAKFFNPETPALLRGLFKKLGAVGELTTVAIEGVFKELCEEKGIKLGQVGPAVRLALSGSTASPGIYEMIEVLGLEETGKRLERAIAKLC</sequence>
<keyword id="KW-0030">Aminoacyl-tRNA synthetase</keyword>
<keyword id="KW-0067">ATP-binding</keyword>
<keyword id="KW-0963">Cytoplasm</keyword>
<keyword id="KW-0436">Ligase</keyword>
<keyword id="KW-0547">Nucleotide-binding</keyword>
<keyword id="KW-0648">Protein biosynthesis</keyword>
<keyword id="KW-1185">Reference proteome</keyword>
<evidence type="ECO:0000255" key="1">
    <source>
        <dbReference type="HAMAP-Rule" id="MF_00022"/>
    </source>
</evidence>
<dbReference type="EC" id="6.1.1.17" evidence="1"/>
<dbReference type="EMBL" id="CP001124">
    <property type="protein sequence ID" value="ACH39291.1"/>
    <property type="molecule type" value="Genomic_DNA"/>
</dbReference>
<dbReference type="RefSeq" id="WP_012530713.1">
    <property type="nucleotide sequence ID" value="NC_011146.1"/>
</dbReference>
<dbReference type="SMR" id="B5EEE6"/>
<dbReference type="STRING" id="404380.Gbem_2279"/>
<dbReference type="KEGG" id="gbm:Gbem_2279"/>
<dbReference type="eggNOG" id="COG0008">
    <property type="taxonomic scope" value="Bacteria"/>
</dbReference>
<dbReference type="HOGENOM" id="CLU_015768_6_0_7"/>
<dbReference type="OrthoDB" id="9807503at2"/>
<dbReference type="Proteomes" id="UP000008825">
    <property type="component" value="Chromosome"/>
</dbReference>
<dbReference type="GO" id="GO:0005829">
    <property type="term" value="C:cytosol"/>
    <property type="evidence" value="ECO:0007669"/>
    <property type="project" value="TreeGrafter"/>
</dbReference>
<dbReference type="GO" id="GO:0005524">
    <property type="term" value="F:ATP binding"/>
    <property type="evidence" value="ECO:0007669"/>
    <property type="project" value="UniProtKB-UniRule"/>
</dbReference>
<dbReference type="GO" id="GO:0004818">
    <property type="term" value="F:glutamate-tRNA ligase activity"/>
    <property type="evidence" value="ECO:0007669"/>
    <property type="project" value="UniProtKB-UniRule"/>
</dbReference>
<dbReference type="GO" id="GO:0000049">
    <property type="term" value="F:tRNA binding"/>
    <property type="evidence" value="ECO:0007669"/>
    <property type="project" value="InterPro"/>
</dbReference>
<dbReference type="GO" id="GO:0008270">
    <property type="term" value="F:zinc ion binding"/>
    <property type="evidence" value="ECO:0007669"/>
    <property type="project" value="InterPro"/>
</dbReference>
<dbReference type="GO" id="GO:0006424">
    <property type="term" value="P:glutamyl-tRNA aminoacylation"/>
    <property type="evidence" value="ECO:0007669"/>
    <property type="project" value="UniProtKB-UniRule"/>
</dbReference>
<dbReference type="CDD" id="cd00808">
    <property type="entry name" value="GluRS_core"/>
    <property type="match status" value="1"/>
</dbReference>
<dbReference type="FunFam" id="3.40.50.620:FF:000007">
    <property type="entry name" value="Glutamate--tRNA ligase"/>
    <property type="match status" value="1"/>
</dbReference>
<dbReference type="Gene3D" id="1.10.10.350">
    <property type="match status" value="1"/>
</dbReference>
<dbReference type="Gene3D" id="3.40.50.620">
    <property type="entry name" value="HUPs"/>
    <property type="match status" value="1"/>
</dbReference>
<dbReference type="HAMAP" id="MF_00022">
    <property type="entry name" value="Glu_tRNA_synth_type1"/>
    <property type="match status" value="1"/>
</dbReference>
<dbReference type="InterPro" id="IPR045462">
    <property type="entry name" value="aa-tRNA-synth_I_cd-bd"/>
</dbReference>
<dbReference type="InterPro" id="IPR020751">
    <property type="entry name" value="aa-tRNA-synth_I_codon-bd_sub2"/>
</dbReference>
<dbReference type="InterPro" id="IPR001412">
    <property type="entry name" value="aa-tRNA-synth_I_CS"/>
</dbReference>
<dbReference type="InterPro" id="IPR008925">
    <property type="entry name" value="aa_tRNA-synth_I_cd-bd_sf"/>
</dbReference>
<dbReference type="InterPro" id="IPR004527">
    <property type="entry name" value="Glu-tRNA-ligase_bac/mito"/>
</dbReference>
<dbReference type="InterPro" id="IPR000924">
    <property type="entry name" value="Glu/Gln-tRNA-synth"/>
</dbReference>
<dbReference type="InterPro" id="IPR020058">
    <property type="entry name" value="Glu/Gln-tRNA-synth_Ib_cat-dom"/>
</dbReference>
<dbReference type="InterPro" id="IPR049940">
    <property type="entry name" value="GluQ/Sye"/>
</dbReference>
<dbReference type="InterPro" id="IPR033910">
    <property type="entry name" value="GluRS_core"/>
</dbReference>
<dbReference type="InterPro" id="IPR014729">
    <property type="entry name" value="Rossmann-like_a/b/a_fold"/>
</dbReference>
<dbReference type="NCBIfam" id="TIGR00464">
    <property type="entry name" value="gltX_bact"/>
    <property type="match status" value="1"/>
</dbReference>
<dbReference type="NCBIfam" id="NF004315">
    <property type="entry name" value="PRK05710.1-4"/>
    <property type="match status" value="1"/>
</dbReference>
<dbReference type="PANTHER" id="PTHR43311">
    <property type="entry name" value="GLUTAMATE--TRNA LIGASE"/>
    <property type="match status" value="1"/>
</dbReference>
<dbReference type="PANTHER" id="PTHR43311:SF2">
    <property type="entry name" value="GLUTAMATE--TRNA LIGASE, MITOCHONDRIAL-RELATED"/>
    <property type="match status" value="1"/>
</dbReference>
<dbReference type="Pfam" id="PF19269">
    <property type="entry name" value="Anticodon_2"/>
    <property type="match status" value="1"/>
</dbReference>
<dbReference type="Pfam" id="PF00749">
    <property type="entry name" value="tRNA-synt_1c"/>
    <property type="match status" value="1"/>
</dbReference>
<dbReference type="PRINTS" id="PR00987">
    <property type="entry name" value="TRNASYNTHGLU"/>
</dbReference>
<dbReference type="SUPFAM" id="SSF48163">
    <property type="entry name" value="An anticodon-binding domain of class I aminoacyl-tRNA synthetases"/>
    <property type="match status" value="1"/>
</dbReference>
<dbReference type="SUPFAM" id="SSF52374">
    <property type="entry name" value="Nucleotidylyl transferase"/>
    <property type="match status" value="1"/>
</dbReference>
<dbReference type="PROSITE" id="PS00178">
    <property type="entry name" value="AA_TRNA_LIGASE_I"/>
    <property type="match status" value="1"/>
</dbReference>
<accession>B5EEE6</accession>
<proteinExistence type="inferred from homology"/>
<comment type="function">
    <text evidence="1">Catalyzes the attachment of glutamate to tRNA(Glu) in a two-step reaction: glutamate is first activated by ATP to form Glu-AMP and then transferred to the acceptor end of tRNA(Glu).</text>
</comment>
<comment type="catalytic activity">
    <reaction evidence="1">
        <text>tRNA(Glu) + L-glutamate + ATP = L-glutamyl-tRNA(Glu) + AMP + diphosphate</text>
        <dbReference type="Rhea" id="RHEA:23540"/>
        <dbReference type="Rhea" id="RHEA-COMP:9663"/>
        <dbReference type="Rhea" id="RHEA-COMP:9680"/>
        <dbReference type="ChEBI" id="CHEBI:29985"/>
        <dbReference type="ChEBI" id="CHEBI:30616"/>
        <dbReference type="ChEBI" id="CHEBI:33019"/>
        <dbReference type="ChEBI" id="CHEBI:78442"/>
        <dbReference type="ChEBI" id="CHEBI:78520"/>
        <dbReference type="ChEBI" id="CHEBI:456215"/>
        <dbReference type="EC" id="6.1.1.17"/>
    </reaction>
</comment>
<comment type="subunit">
    <text evidence="1">Monomer.</text>
</comment>
<comment type="subcellular location">
    <subcellularLocation>
        <location evidence="1">Cytoplasm</location>
    </subcellularLocation>
</comment>
<comment type="similarity">
    <text evidence="1">Belongs to the class-I aminoacyl-tRNA synthetase family. Glutamate--tRNA ligase type 1 subfamily.</text>
</comment>
<name>SYE_CITBB</name>
<reference key="1">
    <citation type="submission" date="2008-07" db="EMBL/GenBank/DDBJ databases">
        <title>Complete sequence of Geobacter bemidjiensis BEM.</title>
        <authorList>
            <consortium name="US DOE Joint Genome Institute"/>
            <person name="Lucas S."/>
            <person name="Copeland A."/>
            <person name="Lapidus A."/>
            <person name="Glavina del Rio T."/>
            <person name="Dalin E."/>
            <person name="Tice H."/>
            <person name="Bruce D."/>
            <person name="Goodwin L."/>
            <person name="Pitluck S."/>
            <person name="Kiss H."/>
            <person name="Brettin T."/>
            <person name="Detter J.C."/>
            <person name="Han C."/>
            <person name="Kuske C.R."/>
            <person name="Schmutz J."/>
            <person name="Larimer F."/>
            <person name="Land M."/>
            <person name="Hauser L."/>
            <person name="Kyrpides N."/>
            <person name="Lykidis A."/>
            <person name="Lovley D."/>
            <person name="Richardson P."/>
        </authorList>
    </citation>
    <scope>NUCLEOTIDE SEQUENCE [LARGE SCALE GENOMIC DNA]</scope>
    <source>
        <strain>ATCC BAA-1014 / DSM 16622 / JCM 12645 / Bem</strain>
    </source>
</reference>
<organism>
    <name type="scientific">Citrifermentans bemidjiense (strain ATCC BAA-1014 / DSM 16622 / JCM 12645 / Bem)</name>
    <name type="common">Geobacter bemidjiensis</name>
    <dbReference type="NCBI Taxonomy" id="404380"/>
    <lineage>
        <taxon>Bacteria</taxon>
        <taxon>Pseudomonadati</taxon>
        <taxon>Thermodesulfobacteriota</taxon>
        <taxon>Desulfuromonadia</taxon>
        <taxon>Geobacterales</taxon>
        <taxon>Geobacteraceae</taxon>
        <taxon>Citrifermentans</taxon>
    </lineage>
</organism>
<feature type="chain" id="PRO_1000090077" description="Glutamate--tRNA ligase">
    <location>
        <begin position="1"/>
        <end position="467"/>
    </location>
</feature>
<feature type="short sequence motif" description="'HIGH' region" evidence="1">
    <location>
        <begin position="10"/>
        <end position="20"/>
    </location>
</feature>
<feature type="short sequence motif" description="'KMSKS' region" evidence="1">
    <location>
        <begin position="238"/>
        <end position="242"/>
    </location>
</feature>
<feature type="binding site" evidence="1">
    <location>
        <position position="241"/>
    </location>
    <ligand>
        <name>ATP</name>
        <dbReference type="ChEBI" id="CHEBI:30616"/>
    </ligand>
</feature>
<protein>
    <recommendedName>
        <fullName evidence="1">Glutamate--tRNA ligase</fullName>
        <ecNumber evidence="1">6.1.1.17</ecNumber>
    </recommendedName>
    <alternativeName>
        <fullName evidence="1">Glutamyl-tRNA synthetase</fullName>
        <shortName evidence="1">GluRS</shortName>
    </alternativeName>
</protein>